<gene>
    <name evidence="1" type="primary">cmk</name>
    <name type="ordered locus">PBPRA2451</name>
</gene>
<accession>Q6LPE2</accession>
<comment type="catalytic activity">
    <reaction evidence="1">
        <text>CMP + ATP = CDP + ADP</text>
        <dbReference type="Rhea" id="RHEA:11600"/>
        <dbReference type="ChEBI" id="CHEBI:30616"/>
        <dbReference type="ChEBI" id="CHEBI:58069"/>
        <dbReference type="ChEBI" id="CHEBI:60377"/>
        <dbReference type="ChEBI" id="CHEBI:456216"/>
        <dbReference type="EC" id="2.7.4.25"/>
    </reaction>
</comment>
<comment type="catalytic activity">
    <reaction evidence="1">
        <text>dCMP + ATP = dCDP + ADP</text>
        <dbReference type="Rhea" id="RHEA:25094"/>
        <dbReference type="ChEBI" id="CHEBI:30616"/>
        <dbReference type="ChEBI" id="CHEBI:57566"/>
        <dbReference type="ChEBI" id="CHEBI:58593"/>
        <dbReference type="ChEBI" id="CHEBI:456216"/>
        <dbReference type="EC" id="2.7.4.25"/>
    </reaction>
</comment>
<comment type="subcellular location">
    <subcellularLocation>
        <location evidence="1">Cytoplasm</location>
    </subcellularLocation>
</comment>
<comment type="similarity">
    <text evidence="1">Belongs to the cytidylate kinase family. Type 1 subfamily.</text>
</comment>
<comment type="sequence caution" evidence="2">
    <conflict type="erroneous initiation">
        <sequence resource="EMBL-CDS" id="CAG20834"/>
    </conflict>
</comment>
<evidence type="ECO:0000255" key="1">
    <source>
        <dbReference type="HAMAP-Rule" id="MF_00238"/>
    </source>
</evidence>
<evidence type="ECO:0000305" key="2"/>
<sequence length="228" mass="24766">MSTHAPVITVDGPSGAGKGTLCMLLAEKLGWHLLDSGAIYRVLALAAIHHGVDLESEDVLVPLAAHLDVQFKAEGDLVKVILEGEDVSGELRKEETGMTASKVAALPRVREALLRRQRAFSNAPGLVADGRDMGTVVFPNAIVKIFLDASAEERANRRMNQLQQKGLDVNFGSLLSEIQERDDRDRNRSVAPLRPAEDALVLDSTDMSIEQVTAQAFAYIEQALEQKS</sequence>
<keyword id="KW-0067">ATP-binding</keyword>
<keyword id="KW-0963">Cytoplasm</keyword>
<keyword id="KW-0418">Kinase</keyword>
<keyword id="KW-0547">Nucleotide-binding</keyword>
<keyword id="KW-1185">Reference proteome</keyword>
<keyword id="KW-0808">Transferase</keyword>
<dbReference type="EC" id="2.7.4.25" evidence="1"/>
<dbReference type="EMBL" id="CR378671">
    <property type="protein sequence ID" value="CAG20834.1"/>
    <property type="status" value="ALT_INIT"/>
    <property type="molecule type" value="Genomic_DNA"/>
</dbReference>
<dbReference type="RefSeq" id="WP_041394408.1">
    <property type="nucleotide sequence ID" value="NC_006370.1"/>
</dbReference>
<dbReference type="SMR" id="Q6LPE2"/>
<dbReference type="STRING" id="298386.PBPRA2451"/>
<dbReference type="KEGG" id="ppr:PBPRA2451"/>
<dbReference type="eggNOG" id="COG0283">
    <property type="taxonomic scope" value="Bacteria"/>
</dbReference>
<dbReference type="HOGENOM" id="CLU_079959_0_2_6"/>
<dbReference type="Proteomes" id="UP000000593">
    <property type="component" value="Chromosome 1"/>
</dbReference>
<dbReference type="GO" id="GO:0005829">
    <property type="term" value="C:cytosol"/>
    <property type="evidence" value="ECO:0007669"/>
    <property type="project" value="TreeGrafter"/>
</dbReference>
<dbReference type="GO" id="GO:0005524">
    <property type="term" value="F:ATP binding"/>
    <property type="evidence" value="ECO:0007669"/>
    <property type="project" value="UniProtKB-UniRule"/>
</dbReference>
<dbReference type="GO" id="GO:0036430">
    <property type="term" value="F:CMP kinase activity"/>
    <property type="evidence" value="ECO:0007669"/>
    <property type="project" value="RHEA"/>
</dbReference>
<dbReference type="GO" id="GO:0036431">
    <property type="term" value="F:dCMP kinase activity"/>
    <property type="evidence" value="ECO:0007669"/>
    <property type="project" value="RHEA"/>
</dbReference>
<dbReference type="GO" id="GO:0015949">
    <property type="term" value="P:nucleobase-containing small molecule interconversion"/>
    <property type="evidence" value="ECO:0007669"/>
    <property type="project" value="TreeGrafter"/>
</dbReference>
<dbReference type="GO" id="GO:0006220">
    <property type="term" value="P:pyrimidine nucleotide metabolic process"/>
    <property type="evidence" value="ECO:0007669"/>
    <property type="project" value="UniProtKB-UniRule"/>
</dbReference>
<dbReference type="CDD" id="cd02020">
    <property type="entry name" value="CMPK"/>
    <property type="match status" value="1"/>
</dbReference>
<dbReference type="FunFam" id="3.40.50.300:FF:000262">
    <property type="entry name" value="Cytidylate kinase"/>
    <property type="match status" value="1"/>
</dbReference>
<dbReference type="Gene3D" id="3.40.50.300">
    <property type="entry name" value="P-loop containing nucleotide triphosphate hydrolases"/>
    <property type="match status" value="1"/>
</dbReference>
<dbReference type="HAMAP" id="MF_00238">
    <property type="entry name" value="Cytidyl_kinase_type1"/>
    <property type="match status" value="1"/>
</dbReference>
<dbReference type="InterPro" id="IPR003136">
    <property type="entry name" value="Cytidylate_kin"/>
</dbReference>
<dbReference type="InterPro" id="IPR011994">
    <property type="entry name" value="Cytidylate_kinase_dom"/>
</dbReference>
<dbReference type="InterPro" id="IPR027417">
    <property type="entry name" value="P-loop_NTPase"/>
</dbReference>
<dbReference type="NCBIfam" id="TIGR00017">
    <property type="entry name" value="cmk"/>
    <property type="match status" value="1"/>
</dbReference>
<dbReference type="PANTHER" id="PTHR21299:SF2">
    <property type="entry name" value="CYTIDYLATE KINASE"/>
    <property type="match status" value="1"/>
</dbReference>
<dbReference type="PANTHER" id="PTHR21299">
    <property type="entry name" value="CYTIDYLATE KINASE/PANTOATE-BETA-ALANINE LIGASE"/>
    <property type="match status" value="1"/>
</dbReference>
<dbReference type="Pfam" id="PF02224">
    <property type="entry name" value="Cytidylate_kin"/>
    <property type="match status" value="1"/>
</dbReference>
<dbReference type="SUPFAM" id="SSF52540">
    <property type="entry name" value="P-loop containing nucleoside triphosphate hydrolases"/>
    <property type="match status" value="1"/>
</dbReference>
<name>KCY_PHOPR</name>
<reference key="1">
    <citation type="journal article" date="2005" name="Science">
        <title>Life at depth: Photobacterium profundum genome sequence and expression analysis.</title>
        <authorList>
            <person name="Vezzi A."/>
            <person name="Campanaro S."/>
            <person name="D'Angelo M."/>
            <person name="Simonato F."/>
            <person name="Vitulo N."/>
            <person name="Lauro F.M."/>
            <person name="Cestaro A."/>
            <person name="Malacrida G."/>
            <person name="Simionati B."/>
            <person name="Cannata N."/>
            <person name="Romualdi C."/>
            <person name="Bartlett D.H."/>
            <person name="Valle G."/>
        </authorList>
    </citation>
    <scope>NUCLEOTIDE SEQUENCE [LARGE SCALE GENOMIC DNA]</scope>
    <source>
        <strain>ATCC BAA-1253 / SS9</strain>
    </source>
</reference>
<protein>
    <recommendedName>
        <fullName evidence="1">Cytidylate kinase</fullName>
        <shortName evidence="1">CK</shortName>
        <ecNumber evidence="1">2.7.4.25</ecNumber>
    </recommendedName>
    <alternativeName>
        <fullName evidence="1">Cytidine monophosphate kinase</fullName>
        <shortName evidence="1">CMP kinase</shortName>
    </alternativeName>
</protein>
<proteinExistence type="inferred from homology"/>
<feature type="chain" id="PRO_0000131953" description="Cytidylate kinase">
    <location>
        <begin position="1"/>
        <end position="228"/>
    </location>
</feature>
<feature type="binding site" evidence="1">
    <location>
        <begin position="12"/>
        <end position="20"/>
    </location>
    <ligand>
        <name>ATP</name>
        <dbReference type="ChEBI" id="CHEBI:30616"/>
    </ligand>
</feature>
<organism>
    <name type="scientific">Photobacterium profundum (strain SS9)</name>
    <dbReference type="NCBI Taxonomy" id="298386"/>
    <lineage>
        <taxon>Bacteria</taxon>
        <taxon>Pseudomonadati</taxon>
        <taxon>Pseudomonadota</taxon>
        <taxon>Gammaproteobacteria</taxon>
        <taxon>Vibrionales</taxon>
        <taxon>Vibrionaceae</taxon>
        <taxon>Photobacterium</taxon>
    </lineage>
</organism>